<reference key="1">
    <citation type="journal article" date="1999" name="Cytogenet. Cell Genet.">
        <title>Cloning, characterization, and chromosome assignment of Zfp146 the mouse ortholog of human ZNF146, a gene amplified and overexpressed in pancreatic cancer, and Zfp260 a closely related gene.</title>
        <authorList>
            <person name="Blottiere L."/>
            <person name="Apiou F."/>
            <person name="Ferbus D."/>
            <person name="Guenzi C."/>
            <person name="Dutrillaux B."/>
            <person name="Prosperi M.-T."/>
            <person name="Goubin G."/>
        </authorList>
    </citation>
    <scope>NUCLEOTIDE SEQUENCE [MRNA]</scope>
    <scope>TISSUE SPECIFICITY</scope>
</reference>
<reference key="2">
    <citation type="journal article" date="2005" name="Science">
        <title>The transcriptional landscape of the mammalian genome.</title>
        <authorList>
            <person name="Carninci P."/>
            <person name="Kasukawa T."/>
            <person name="Katayama S."/>
            <person name="Gough J."/>
            <person name="Frith M.C."/>
            <person name="Maeda N."/>
            <person name="Oyama R."/>
            <person name="Ravasi T."/>
            <person name="Lenhard B."/>
            <person name="Wells C."/>
            <person name="Kodzius R."/>
            <person name="Shimokawa K."/>
            <person name="Bajic V.B."/>
            <person name="Brenner S.E."/>
            <person name="Batalov S."/>
            <person name="Forrest A.R."/>
            <person name="Zavolan M."/>
            <person name="Davis M.J."/>
            <person name="Wilming L.G."/>
            <person name="Aidinis V."/>
            <person name="Allen J.E."/>
            <person name="Ambesi-Impiombato A."/>
            <person name="Apweiler R."/>
            <person name="Aturaliya R.N."/>
            <person name="Bailey T.L."/>
            <person name="Bansal M."/>
            <person name="Baxter L."/>
            <person name="Beisel K.W."/>
            <person name="Bersano T."/>
            <person name="Bono H."/>
            <person name="Chalk A.M."/>
            <person name="Chiu K.P."/>
            <person name="Choudhary V."/>
            <person name="Christoffels A."/>
            <person name="Clutterbuck D.R."/>
            <person name="Crowe M.L."/>
            <person name="Dalla E."/>
            <person name="Dalrymple B.P."/>
            <person name="de Bono B."/>
            <person name="Della Gatta G."/>
            <person name="di Bernardo D."/>
            <person name="Down T."/>
            <person name="Engstrom P."/>
            <person name="Fagiolini M."/>
            <person name="Faulkner G."/>
            <person name="Fletcher C.F."/>
            <person name="Fukushima T."/>
            <person name="Furuno M."/>
            <person name="Futaki S."/>
            <person name="Gariboldi M."/>
            <person name="Georgii-Hemming P."/>
            <person name="Gingeras T.R."/>
            <person name="Gojobori T."/>
            <person name="Green R.E."/>
            <person name="Gustincich S."/>
            <person name="Harbers M."/>
            <person name="Hayashi Y."/>
            <person name="Hensch T.K."/>
            <person name="Hirokawa N."/>
            <person name="Hill D."/>
            <person name="Huminiecki L."/>
            <person name="Iacono M."/>
            <person name="Ikeo K."/>
            <person name="Iwama A."/>
            <person name="Ishikawa T."/>
            <person name="Jakt M."/>
            <person name="Kanapin A."/>
            <person name="Katoh M."/>
            <person name="Kawasawa Y."/>
            <person name="Kelso J."/>
            <person name="Kitamura H."/>
            <person name="Kitano H."/>
            <person name="Kollias G."/>
            <person name="Krishnan S.P."/>
            <person name="Kruger A."/>
            <person name="Kummerfeld S.K."/>
            <person name="Kurochkin I.V."/>
            <person name="Lareau L.F."/>
            <person name="Lazarevic D."/>
            <person name="Lipovich L."/>
            <person name="Liu J."/>
            <person name="Liuni S."/>
            <person name="McWilliam S."/>
            <person name="Madan Babu M."/>
            <person name="Madera M."/>
            <person name="Marchionni L."/>
            <person name="Matsuda H."/>
            <person name="Matsuzawa S."/>
            <person name="Miki H."/>
            <person name="Mignone F."/>
            <person name="Miyake S."/>
            <person name="Morris K."/>
            <person name="Mottagui-Tabar S."/>
            <person name="Mulder N."/>
            <person name="Nakano N."/>
            <person name="Nakauchi H."/>
            <person name="Ng P."/>
            <person name="Nilsson R."/>
            <person name="Nishiguchi S."/>
            <person name="Nishikawa S."/>
            <person name="Nori F."/>
            <person name="Ohara O."/>
            <person name="Okazaki Y."/>
            <person name="Orlando V."/>
            <person name="Pang K.C."/>
            <person name="Pavan W.J."/>
            <person name="Pavesi G."/>
            <person name="Pesole G."/>
            <person name="Petrovsky N."/>
            <person name="Piazza S."/>
            <person name="Reed J."/>
            <person name="Reid J.F."/>
            <person name="Ring B.Z."/>
            <person name="Ringwald M."/>
            <person name="Rost B."/>
            <person name="Ruan Y."/>
            <person name="Salzberg S.L."/>
            <person name="Sandelin A."/>
            <person name="Schneider C."/>
            <person name="Schoenbach C."/>
            <person name="Sekiguchi K."/>
            <person name="Semple C.A."/>
            <person name="Seno S."/>
            <person name="Sessa L."/>
            <person name="Sheng Y."/>
            <person name="Shibata Y."/>
            <person name="Shimada H."/>
            <person name="Shimada K."/>
            <person name="Silva D."/>
            <person name="Sinclair B."/>
            <person name="Sperling S."/>
            <person name="Stupka E."/>
            <person name="Sugiura K."/>
            <person name="Sultana R."/>
            <person name="Takenaka Y."/>
            <person name="Taki K."/>
            <person name="Tammoja K."/>
            <person name="Tan S.L."/>
            <person name="Tang S."/>
            <person name="Taylor M.S."/>
            <person name="Tegner J."/>
            <person name="Teichmann S.A."/>
            <person name="Ueda H.R."/>
            <person name="van Nimwegen E."/>
            <person name="Verardo R."/>
            <person name="Wei C.L."/>
            <person name="Yagi K."/>
            <person name="Yamanishi H."/>
            <person name="Zabarovsky E."/>
            <person name="Zhu S."/>
            <person name="Zimmer A."/>
            <person name="Hide W."/>
            <person name="Bult C."/>
            <person name="Grimmond S.M."/>
            <person name="Teasdale R.D."/>
            <person name="Liu E.T."/>
            <person name="Brusic V."/>
            <person name="Quackenbush J."/>
            <person name="Wahlestedt C."/>
            <person name="Mattick J.S."/>
            <person name="Hume D.A."/>
            <person name="Kai C."/>
            <person name="Sasaki D."/>
            <person name="Tomaru Y."/>
            <person name="Fukuda S."/>
            <person name="Kanamori-Katayama M."/>
            <person name="Suzuki M."/>
            <person name="Aoki J."/>
            <person name="Arakawa T."/>
            <person name="Iida J."/>
            <person name="Imamura K."/>
            <person name="Itoh M."/>
            <person name="Kato T."/>
            <person name="Kawaji H."/>
            <person name="Kawagashira N."/>
            <person name="Kawashima T."/>
            <person name="Kojima M."/>
            <person name="Kondo S."/>
            <person name="Konno H."/>
            <person name="Nakano K."/>
            <person name="Ninomiya N."/>
            <person name="Nishio T."/>
            <person name="Okada M."/>
            <person name="Plessy C."/>
            <person name="Shibata K."/>
            <person name="Shiraki T."/>
            <person name="Suzuki S."/>
            <person name="Tagami M."/>
            <person name="Waki K."/>
            <person name="Watahiki A."/>
            <person name="Okamura-Oho Y."/>
            <person name="Suzuki H."/>
            <person name="Kawai J."/>
            <person name="Hayashizaki Y."/>
        </authorList>
    </citation>
    <scope>NUCLEOTIDE SEQUENCE [LARGE SCALE MRNA]</scope>
    <source>
        <strain>C57BL/6J</strain>
        <tissue>Corpus striatum</tissue>
    </source>
</reference>
<reference key="3">
    <citation type="journal article" date="2004" name="Genome Res.">
        <title>The status, quality, and expansion of the NIH full-length cDNA project: the Mammalian Gene Collection (MGC).</title>
        <authorList>
            <consortium name="The MGC Project Team"/>
        </authorList>
    </citation>
    <scope>NUCLEOTIDE SEQUENCE [LARGE SCALE MRNA]</scope>
</reference>
<reference key="4">
    <citation type="journal article" date="2002" name="Transgenic Res.">
        <title>Targeted expression of the only zinc finger gene in transgenic mice is associated with impaired mammary development.</title>
        <authorList>
            <person name="Besnar N."/>
            <person name="Persuy M.-A."/>
            <person name="Stinnakre M.-G."/>
            <person name="Lepourry L."/>
            <person name="Da Silva J.C."/>
            <person name="Goubin G."/>
            <person name="Vilotte J.-L."/>
        </authorList>
    </citation>
    <scope>DISRUPTION PHENOTYPE</scope>
    <scope>TISSUE SPECIFICITY</scope>
</reference>
<proteinExistence type="evidence at transcript level"/>
<feature type="chain" id="PRO_0000047277" description="Zinc finger protein OZF">
    <location>
        <begin position="1"/>
        <end position="292"/>
    </location>
</feature>
<feature type="zinc finger region" description="C2H2-type 1" evidence="3">
    <location>
        <begin position="16"/>
        <end position="38"/>
    </location>
</feature>
<feature type="zinc finger region" description="C2H2-type 2" evidence="3">
    <location>
        <begin position="44"/>
        <end position="66"/>
    </location>
</feature>
<feature type="zinc finger region" description="C2H2-type 3" evidence="3">
    <location>
        <begin position="72"/>
        <end position="94"/>
    </location>
</feature>
<feature type="zinc finger region" description="C2H2-type 4" evidence="3">
    <location>
        <begin position="100"/>
        <end position="122"/>
    </location>
</feature>
<feature type="zinc finger region" description="C2H2-type 5" evidence="3">
    <location>
        <begin position="128"/>
        <end position="150"/>
    </location>
</feature>
<feature type="zinc finger region" description="C2H2-type 6" evidence="3">
    <location>
        <begin position="156"/>
        <end position="178"/>
    </location>
</feature>
<feature type="zinc finger region" description="C2H2-type 7" evidence="3">
    <location>
        <begin position="184"/>
        <end position="206"/>
    </location>
</feature>
<feature type="zinc finger region" description="C2H2-type 8" evidence="3">
    <location>
        <begin position="212"/>
        <end position="234"/>
    </location>
</feature>
<feature type="zinc finger region" description="C2H2-type 9" evidence="3">
    <location>
        <begin position="240"/>
        <end position="262"/>
    </location>
</feature>
<feature type="zinc finger region" description="C2H2-type 10" evidence="3">
    <location>
        <begin position="268"/>
        <end position="290"/>
    </location>
</feature>
<feature type="region of interest" description="Interaction with TERF2IP" evidence="1">
    <location>
        <begin position="212"/>
        <end position="292"/>
    </location>
</feature>
<feature type="cross-link" description="Glycyl lysine isopeptide (Lys-Gly) (interchain with G-Cter in SUMO2)" evidence="2">
    <location>
        <position position="28"/>
    </location>
</feature>
<feature type="cross-link" description="Glycyl lysine isopeptide (Lys-Gly) (interchain with G-Cter in SUMO2)" evidence="2">
    <location>
        <position position="51"/>
    </location>
</feature>
<feature type="cross-link" description="Glycyl lysine isopeptide (Lys-Gly) (interchain with G-Cter in SUMO2)" evidence="2">
    <location>
        <position position="56"/>
    </location>
</feature>
<feature type="cross-link" description="Glycyl lysine isopeptide (Lys-Gly) (interchain with G-Cter in SUMO)" evidence="1">
    <location>
        <position position="157"/>
    </location>
</feature>
<feature type="cross-link" description="Glycyl lysine isopeptide (Lys-Gly) (interchain with G-Cter in SUMO)" evidence="1">
    <location>
        <position position="169"/>
    </location>
</feature>
<feature type="cross-link" description="Glycyl lysine isopeptide (Lys-Gly) (interchain with G-Cter in SUMO2)" evidence="2">
    <location>
        <position position="173"/>
    </location>
</feature>
<sequence>MSQLSQQRILSGGSPFACKVCGKLFSHKSNLTEHEHFHSREKPFECNECGKAFSQKQYVIKHQSTHSGEKLFECSDCGKAFSQKENLLTHQKIHTGEKPFECKDCGKAFIQKSNLIRHQRTHTGEKPFICKECGKTFSGKSNLTEHEKIHIGEKPFKCNECGTAFGQKKYLIKHQNIHTGEKPYECNECGKAFSQRTSLIVHVRIHSGDKPYECNVCGKAFSQSSSLTVHVRSHTGEKPYGCNECGKAFSQFSTLALHLRIHTGKKPYQCSECGKAFSQKSHHIRHQKIHTH</sequence>
<organism>
    <name type="scientific">Mus musculus</name>
    <name type="common">Mouse</name>
    <dbReference type="NCBI Taxonomy" id="10090"/>
    <lineage>
        <taxon>Eukaryota</taxon>
        <taxon>Metazoa</taxon>
        <taxon>Chordata</taxon>
        <taxon>Craniata</taxon>
        <taxon>Vertebrata</taxon>
        <taxon>Euteleostomi</taxon>
        <taxon>Mammalia</taxon>
        <taxon>Eutheria</taxon>
        <taxon>Euarchontoglires</taxon>
        <taxon>Glires</taxon>
        <taxon>Rodentia</taxon>
        <taxon>Myomorpha</taxon>
        <taxon>Muroidea</taxon>
        <taxon>Muridae</taxon>
        <taxon>Murinae</taxon>
        <taxon>Mus</taxon>
        <taxon>Mus</taxon>
    </lineage>
</organism>
<comment type="subunit">
    <text evidence="1">Binds DNA. Interacts with SUMO conjugating enzyme UBC9/UBE2I. Interacts with the telomeric protein TERF2IP (By similarity).</text>
</comment>
<comment type="subcellular location">
    <subcellularLocation>
        <location evidence="1">Nucleus</location>
    </subcellularLocation>
</comment>
<comment type="tissue specificity">
    <text evidence="4 5">Expressed in heart, brain, liver, lung, skeletal muscle and kidney, and at much lower level in spleen and testicle. Expressed in lactating mammary gland.</text>
</comment>
<comment type="disruption phenotype">
    <text evidence="5">Mice lacking Zfp146 in mammary gland display impaired mammary gland development. They cannot sustain full growth of their pups. This phenotype is associated with an impaired mammary gland development noticeable only after mid-gestation.</text>
</comment>
<comment type="similarity">
    <text evidence="6">Belongs to the krueppel C2H2-type zinc-finger protein family.</text>
</comment>
<comment type="sequence caution" evidence="6">
    <conflict type="erroneous initiation">
        <sequence resource="EMBL-CDS" id="BAC33129"/>
    </conflict>
</comment>
<evidence type="ECO:0000250" key="1"/>
<evidence type="ECO:0000250" key="2">
    <source>
        <dbReference type="UniProtKB" id="Q15072"/>
    </source>
</evidence>
<evidence type="ECO:0000255" key="3">
    <source>
        <dbReference type="PROSITE-ProRule" id="PRU00042"/>
    </source>
</evidence>
<evidence type="ECO:0000269" key="4">
    <source>
    </source>
</evidence>
<evidence type="ECO:0000269" key="5">
    <source>
    </source>
</evidence>
<evidence type="ECO:0000305" key="6"/>
<name>OZF_MOUSE</name>
<accession>Q8BQN6</accession>
<accession>A0JNX3</accession>
<accession>Q9Z0Q5</accession>
<keyword id="KW-0238">DNA-binding</keyword>
<keyword id="KW-1017">Isopeptide bond</keyword>
<keyword id="KW-0479">Metal-binding</keyword>
<keyword id="KW-0539">Nucleus</keyword>
<keyword id="KW-1185">Reference proteome</keyword>
<keyword id="KW-0677">Repeat</keyword>
<keyword id="KW-0832">Ubl conjugation</keyword>
<keyword id="KW-0862">Zinc</keyword>
<keyword id="KW-0863">Zinc-finger</keyword>
<dbReference type="EMBL" id="AJ224763">
    <property type="protein sequence ID" value="CAB38320.1"/>
    <property type="molecule type" value="mRNA"/>
</dbReference>
<dbReference type="EMBL" id="AK047696">
    <property type="protein sequence ID" value="BAC33129.1"/>
    <property type="status" value="ALT_INIT"/>
    <property type="molecule type" value="mRNA"/>
</dbReference>
<dbReference type="EMBL" id="BC127038">
    <property type="protein sequence ID" value="AAI27039.1"/>
    <property type="molecule type" value="mRNA"/>
</dbReference>
<dbReference type="EMBL" id="BC127039">
    <property type="protein sequence ID" value="AAI27040.1"/>
    <property type="molecule type" value="mRNA"/>
</dbReference>
<dbReference type="CCDS" id="CCDS21079.1"/>
<dbReference type="RefSeq" id="NP_036110.1">
    <property type="nucleotide sequence ID" value="NM_011980.3"/>
</dbReference>
<dbReference type="RefSeq" id="XP_006540071.1">
    <property type="nucleotide sequence ID" value="XM_006540008.2"/>
</dbReference>
<dbReference type="RefSeq" id="XP_006540072.1">
    <property type="nucleotide sequence ID" value="XM_006540009.2"/>
</dbReference>
<dbReference type="SMR" id="Q8BQN6"/>
<dbReference type="FunCoup" id="Q8BQN6">
    <property type="interactions" value="338"/>
</dbReference>
<dbReference type="STRING" id="10090.ENSMUSP00000058588"/>
<dbReference type="iPTMnet" id="Q8BQN6"/>
<dbReference type="PhosphoSitePlus" id="Q8BQN6"/>
<dbReference type="PaxDb" id="10090-ENSMUSP00000058588"/>
<dbReference type="PeptideAtlas" id="Q8BQN6"/>
<dbReference type="ProteomicsDB" id="294086"/>
<dbReference type="Pumba" id="Q8BQN6"/>
<dbReference type="Antibodypedia" id="929">
    <property type="antibodies" value="157 antibodies from 25 providers"/>
</dbReference>
<dbReference type="DNASU" id="26465"/>
<dbReference type="Ensembl" id="ENSMUST00000062181.9">
    <property type="protein sequence ID" value="ENSMUSP00000058588.8"/>
    <property type="gene ID" value="ENSMUSG00000037029.9"/>
</dbReference>
<dbReference type="GeneID" id="26465"/>
<dbReference type="KEGG" id="mmu:26465"/>
<dbReference type="UCSC" id="uc009gdn.1">
    <property type="organism name" value="mouse"/>
</dbReference>
<dbReference type="AGR" id="MGI:1347092"/>
<dbReference type="CTD" id="26465"/>
<dbReference type="MGI" id="MGI:1347092">
    <property type="gene designation" value="Zfp146"/>
</dbReference>
<dbReference type="VEuPathDB" id="HostDB:ENSMUSG00000037029"/>
<dbReference type="eggNOG" id="KOG1721">
    <property type="taxonomic scope" value="Eukaryota"/>
</dbReference>
<dbReference type="GeneTree" id="ENSGT00940000162671"/>
<dbReference type="HOGENOM" id="CLU_002678_2_1_1"/>
<dbReference type="InParanoid" id="Q8BQN6"/>
<dbReference type="OMA" id="LTEHENF"/>
<dbReference type="OrthoDB" id="427030at2759"/>
<dbReference type="PhylomeDB" id="Q8BQN6"/>
<dbReference type="TreeFam" id="TF337055"/>
<dbReference type="BioGRID-ORCS" id="26465">
    <property type="hits" value="0 hits in 79 CRISPR screens"/>
</dbReference>
<dbReference type="PRO" id="PR:Q8BQN6"/>
<dbReference type="Proteomes" id="UP000000589">
    <property type="component" value="Chromosome 7"/>
</dbReference>
<dbReference type="RNAct" id="Q8BQN6">
    <property type="molecule type" value="protein"/>
</dbReference>
<dbReference type="Bgee" id="ENSMUSG00000037029">
    <property type="expression patterns" value="Expressed in ventricular zone and 153 other cell types or tissues"/>
</dbReference>
<dbReference type="GO" id="GO:0005829">
    <property type="term" value="C:cytosol"/>
    <property type="evidence" value="ECO:0007669"/>
    <property type="project" value="Ensembl"/>
</dbReference>
<dbReference type="GO" id="GO:0005730">
    <property type="term" value="C:nucleolus"/>
    <property type="evidence" value="ECO:0007669"/>
    <property type="project" value="Ensembl"/>
</dbReference>
<dbReference type="GO" id="GO:0003677">
    <property type="term" value="F:DNA binding"/>
    <property type="evidence" value="ECO:0007669"/>
    <property type="project" value="UniProtKB-KW"/>
</dbReference>
<dbReference type="GO" id="GO:0008270">
    <property type="term" value="F:zinc ion binding"/>
    <property type="evidence" value="ECO:0007669"/>
    <property type="project" value="UniProtKB-KW"/>
</dbReference>
<dbReference type="FunFam" id="3.30.160.60:FF:000295">
    <property type="entry name" value="zinc finger protein 19"/>
    <property type="match status" value="1"/>
</dbReference>
<dbReference type="FunFam" id="3.30.160.60:FF:000794">
    <property type="entry name" value="zinc finger protein 2 isoform X2"/>
    <property type="match status" value="1"/>
</dbReference>
<dbReference type="FunFam" id="3.30.160.60:FF:000919">
    <property type="entry name" value="Zinc finger protein 260"/>
    <property type="match status" value="2"/>
</dbReference>
<dbReference type="FunFam" id="3.30.160.60:FF:001408">
    <property type="entry name" value="Zinc finger protein 260"/>
    <property type="match status" value="1"/>
</dbReference>
<dbReference type="FunFam" id="3.30.160.60:FF:001498">
    <property type="entry name" value="Zinc finger protein 404"/>
    <property type="match status" value="1"/>
</dbReference>
<dbReference type="FunFam" id="3.30.160.60:FF:002254">
    <property type="entry name" value="Zinc finger protein 540"/>
    <property type="match status" value="1"/>
</dbReference>
<dbReference type="FunFam" id="3.30.160.60:FF:000575">
    <property type="entry name" value="Zinc finger protein OZF"/>
    <property type="match status" value="1"/>
</dbReference>
<dbReference type="FunFam" id="3.30.160.60:FF:001060">
    <property type="entry name" value="Zinc finger protein OZF"/>
    <property type="match status" value="1"/>
</dbReference>
<dbReference type="FunFam" id="3.30.160.60:FF:000110">
    <property type="entry name" value="Zinc finger protein-like"/>
    <property type="match status" value="1"/>
</dbReference>
<dbReference type="Gene3D" id="3.30.160.60">
    <property type="entry name" value="Classic Zinc Finger"/>
    <property type="match status" value="10"/>
</dbReference>
<dbReference type="InterPro" id="IPR036236">
    <property type="entry name" value="Znf_C2H2_sf"/>
</dbReference>
<dbReference type="InterPro" id="IPR013087">
    <property type="entry name" value="Znf_C2H2_type"/>
</dbReference>
<dbReference type="PANTHER" id="PTHR23235">
    <property type="entry name" value="KRUEPPEL-LIKE TRANSCRIPTION FACTOR"/>
    <property type="match status" value="1"/>
</dbReference>
<dbReference type="PANTHER" id="PTHR23235:SF142">
    <property type="entry name" value="ZINC FINGER PROTEIN 384"/>
    <property type="match status" value="1"/>
</dbReference>
<dbReference type="Pfam" id="PF00096">
    <property type="entry name" value="zf-C2H2"/>
    <property type="match status" value="10"/>
</dbReference>
<dbReference type="SMART" id="SM00355">
    <property type="entry name" value="ZnF_C2H2"/>
    <property type="match status" value="10"/>
</dbReference>
<dbReference type="SUPFAM" id="SSF57667">
    <property type="entry name" value="beta-beta-alpha zinc fingers"/>
    <property type="match status" value="5"/>
</dbReference>
<dbReference type="PROSITE" id="PS00028">
    <property type="entry name" value="ZINC_FINGER_C2H2_1"/>
    <property type="match status" value="10"/>
</dbReference>
<dbReference type="PROSITE" id="PS50157">
    <property type="entry name" value="ZINC_FINGER_C2H2_2"/>
    <property type="match status" value="10"/>
</dbReference>
<protein>
    <recommendedName>
        <fullName>Zinc finger protein OZF</fullName>
    </recommendedName>
    <alternativeName>
        <fullName>Only zinc finger protein</fullName>
    </alternativeName>
    <alternativeName>
        <fullName>Zinc finger protein 146</fullName>
    </alternativeName>
</protein>
<gene>
    <name type="primary">Znf146</name>
    <name type="synonym">Ozf</name>
    <name type="synonym">Zfp146</name>
</gene>